<reference key="1">
    <citation type="journal article" date="1999" name="Eur. J. Biochem.">
        <title>Structure-function studies of omega-atracotoxin, a potent antagonist of insect voltage-gated calcium channels.</title>
        <authorList>
            <person name="Wang X.-H."/>
            <person name="Smith R."/>
            <person name="Fletcher J.I."/>
            <person name="Wilson H."/>
            <person name="Wood C.J."/>
            <person name="Merlin E.H."/>
            <person name="King G.F."/>
        </authorList>
    </citation>
    <scope>PROTEIN SEQUENCE</scope>
    <scope>TOXIC DOSE</scope>
    <scope>SUBCELLULAR LOCATION</scope>
    <source>
        <tissue>Venom</tissue>
    </source>
</reference>
<evidence type="ECO:0000250" key="1">
    <source>
        <dbReference type="UniProtKB" id="P56207"/>
    </source>
</evidence>
<evidence type="ECO:0000269" key="2">
    <source>
    </source>
</evidence>
<evidence type="ECO:0000303" key="3">
    <source>
    </source>
</evidence>
<evidence type="ECO:0000305" key="4"/>
<evidence type="ECO:0000305" key="5">
    <source>
    </source>
</evidence>
<keyword id="KW-0108">Calcium channel impairing toxin</keyword>
<keyword id="KW-0903">Direct protein sequencing</keyword>
<keyword id="KW-1015">Disulfide bond</keyword>
<keyword id="KW-0872">Ion channel impairing toxin</keyword>
<keyword id="KW-0960">Knottin</keyword>
<keyword id="KW-0528">Neurotoxin</keyword>
<keyword id="KW-0964">Secreted</keyword>
<keyword id="KW-0800">Toxin</keyword>
<keyword id="KW-1218">Voltage-gated calcium channel impairing toxin</keyword>
<organism>
    <name type="scientific">Hadronyche versuta</name>
    <name type="common">Blue mountains funnel-web spider</name>
    <name type="synonym">Atrax versutus</name>
    <dbReference type="NCBI Taxonomy" id="6904"/>
    <lineage>
        <taxon>Eukaryota</taxon>
        <taxon>Metazoa</taxon>
        <taxon>Ecdysozoa</taxon>
        <taxon>Arthropoda</taxon>
        <taxon>Chelicerata</taxon>
        <taxon>Arachnida</taxon>
        <taxon>Araneae</taxon>
        <taxon>Mygalomorphae</taxon>
        <taxon>Hexathelidae</taxon>
        <taxon>Hadronyche</taxon>
    </lineage>
</organism>
<feature type="peptide" id="PRO_0000044989" description="Omega-hexatoxin-Hv1b" evidence="2">
    <location>
        <begin position="1"/>
        <end position="37"/>
    </location>
</feature>
<feature type="site" description="Critical for insecticidal activity" evidence="1">
    <location>
        <position position="10"/>
    </location>
</feature>
<feature type="site" description="Critical for insecticidal activity" evidence="1">
    <location>
        <position position="27"/>
    </location>
</feature>
<feature type="site" description="Critical for insecticidal activity" evidence="1">
    <location>
        <position position="35"/>
    </location>
</feature>
<feature type="disulfide bond" evidence="1">
    <location>
        <begin position="4"/>
        <end position="18"/>
    </location>
</feature>
<feature type="disulfide bond" evidence="1">
    <location>
        <begin position="11"/>
        <end position="22"/>
    </location>
</feature>
<feature type="disulfide bond" evidence="1">
    <location>
        <begin position="17"/>
        <end position="36"/>
    </location>
</feature>
<accession>P81595</accession>
<proteinExistence type="evidence at protein level"/>
<sequence length="37" mass="4061">SSTCIPSGQPCPYNENCCSQSCTYKENENGNTVKRCD</sequence>
<comment type="function">
    <text evidence="1">Inhibits insect, but not mammalian, voltage-gated calcium channels (Cav).</text>
</comment>
<comment type="subcellular location">
    <subcellularLocation>
        <location evidence="2">Secreted</location>
    </subcellularLocation>
</comment>
<comment type="tissue specificity">
    <text evidence="5">Expressed by the venom gland.</text>
</comment>
<comment type="domain">
    <text evidence="1">The presence of a 'disulfide through disulfide knot' structurally defines this protein as a knottin.</text>
</comment>
<comment type="toxic dose">
    <text evidence="2">LD(50) is 224 pmol/g when injected into house crickets (Acheta domestica).</text>
</comment>
<comment type="similarity">
    <text evidence="4">Belongs to the neurotoxin 08 (Shiva) family. 01 (omega toxin) subfamily.</text>
</comment>
<protein>
    <recommendedName>
        <fullName evidence="4">Omega-hexatoxin-Hv1b</fullName>
        <shortName evidence="4">Omega-HXTX-Hv1b</shortName>
    </recommendedName>
    <alternativeName>
        <fullName evidence="3">Omega-atracotoxin-Hv1b</fullName>
        <shortName evidence="3">Omega-AcTx-Hv1b</shortName>
    </alternativeName>
</protein>
<dbReference type="SMR" id="P81595"/>
<dbReference type="ArachnoServer" id="AS000196">
    <property type="toxin name" value="omega-hexatoxin-Hv1b"/>
</dbReference>
<dbReference type="GO" id="GO:0005576">
    <property type="term" value="C:extracellular region"/>
    <property type="evidence" value="ECO:0007669"/>
    <property type="project" value="UniProtKB-SubCell"/>
</dbReference>
<dbReference type="GO" id="GO:0019855">
    <property type="term" value="F:calcium channel inhibitor activity"/>
    <property type="evidence" value="ECO:0007669"/>
    <property type="project" value="InterPro"/>
</dbReference>
<dbReference type="GO" id="GO:0090729">
    <property type="term" value="F:toxin activity"/>
    <property type="evidence" value="ECO:0007669"/>
    <property type="project" value="UniProtKB-KW"/>
</dbReference>
<dbReference type="GO" id="GO:0006952">
    <property type="term" value="P:defense response"/>
    <property type="evidence" value="ECO:0007669"/>
    <property type="project" value="InterPro"/>
</dbReference>
<dbReference type="InterPro" id="IPR009415">
    <property type="entry name" value="Omega-atracotox"/>
</dbReference>
<dbReference type="InterPro" id="IPR018071">
    <property type="entry name" value="Omega-atracotox_CS"/>
</dbReference>
<dbReference type="Pfam" id="PF06357">
    <property type="entry name" value="Omega-toxin"/>
    <property type="match status" value="1"/>
</dbReference>
<dbReference type="SUPFAM" id="SSF57059">
    <property type="entry name" value="omega toxin-like"/>
    <property type="match status" value="1"/>
</dbReference>
<dbReference type="PROSITE" id="PS60016">
    <property type="entry name" value="OMEGA_ACTX_1"/>
    <property type="match status" value="1"/>
</dbReference>
<name>TO1B_HADVE</name>